<protein>
    <recommendedName>
        <fullName>FK506-binding protein 4</fullName>
        <ecNumber evidence="2">5.2.1.8</ecNumber>
    </recommendedName>
    <alternativeName>
        <fullName evidence="2">Histone proline isomerase</fullName>
    </alternativeName>
    <alternativeName>
        <fullName>Peptidyl-prolyl cis-trans isomerase</fullName>
        <shortName>PPIase</shortName>
    </alternativeName>
    <alternativeName>
        <fullName>Rotamase</fullName>
    </alternativeName>
</protein>
<evidence type="ECO:0000250" key="1"/>
<evidence type="ECO:0000250" key="2">
    <source>
        <dbReference type="UniProtKB" id="Q06205"/>
    </source>
</evidence>
<evidence type="ECO:0000255" key="3">
    <source>
        <dbReference type="PROSITE-ProRule" id="PRU00277"/>
    </source>
</evidence>
<evidence type="ECO:0000256" key="4">
    <source>
        <dbReference type="SAM" id="MobiDB-lite"/>
    </source>
</evidence>
<evidence type="ECO:0000305" key="5"/>
<keyword id="KW-0143">Chaperone</keyword>
<keyword id="KW-0413">Isomerase</keyword>
<keyword id="KW-0539">Nucleus</keyword>
<keyword id="KW-1185">Reference proteome</keyword>
<keyword id="KW-0697">Rotamase</keyword>
<sequence>MSGLLPVAVYALKVPAGGLLIPAVPDAAATFRVSMAAIDPDETPEFEDGQTRPRATLKLIRPPADMDIDESDDDYEEDSEEDSDDEEINGGPSDKEKARKLKEAAALKELEDEDEDDDSEGDDENFDLKAAISKLVKGKAPATDDDEDDESDEGLELDEMVVCTLDPERHCQQPLDITVAEGERVFFKVTGTHTVYLTGNYVIPAEEGPSEYDEDEDDEDDEDDYDLSPDEDELVDMGDLLDDEEEDELDGLAHPRVTEIESDEEEAPKLVESKGKNKRTADSDEEMALDDMMAKDGKAKGADNGEPAPSKKQQKKLKKNNGEAAAVEQKKEAKVAKEGKEGKEGKEAKEAKKVQFAKNLEQGPTPSGQKPGETTTGTLGVKEVKGVKIDDKKLGKGPAAKAGNTVAMRYIGKLEDGKVFDANKKGKPFTFKLGKGEVIKGWDIGIAGMAVGGERRITIPPHLAYGKKALPGIPANSKLIFDVKLLEIK</sequence>
<dbReference type="EC" id="5.2.1.8" evidence="2"/>
<dbReference type="EMBL" id="AAHF01000006">
    <property type="protein sequence ID" value="EAL88709.1"/>
    <property type="status" value="ALT_SEQ"/>
    <property type="molecule type" value="Genomic_DNA"/>
</dbReference>
<dbReference type="RefSeq" id="XP_750747.1">
    <property type="nucleotide sequence ID" value="XM_745654.1"/>
</dbReference>
<dbReference type="SMR" id="Q4WMV5"/>
<dbReference type="FunCoup" id="Q4WMV5">
    <property type="interactions" value="568"/>
</dbReference>
<dbReference type="STRING" id="330879.Q4WMV5"/>
<dbReference type="GeneID" id="3508034"/>
<dbReference type="KEGG" id="afm:AFUA_6G08580"/>
<dbReference type="VEuPathDB" id="FungiDB:Afu6g08580"/>
<dbReference type="eggNOG" id="KOG0552">
    <property type="taxonomic scope" value="Eukaryota"/>
</dbReference>
<dbReference type="HOGENOM" id="CLU_022297_3_1_1"/>
<dbReference type="InParanoid" id="Q4WMV5"/>
<dbReference type="OrthoDB" id="77911at2759"/>
<dbReference type="Proteomes" id="UP000002530">
    <property type="component" value="Chromosome 6"/>
</dbReference>
<dbReference type="GO" id="GO:0000785">
    <property type="term" value="C:chromatin"/>
    <property type="evidence" value="ECO:0000318"/>
    <property type="project" value="GO_Central"/>
</dbReference>
<dbReference type="GO" id="GO:0005730">
    <property type="term" value="C:nucleolus"/>
    <property type="evidence" value="ECO:0000318"/>
    <property type="project" value="GO_Central"/>
</dbReference>
<dbReference type="GO" id="GO:0003755">
    <property type="term" value="F:peptidyl-prolyl cis-trans isomerase activity"/>
    <property type="evidence" value="ECO:0000318"/>
    <property type="project" value="GO_Central"/>
</dbReference>
<dbReference type="FunFam" id="3.10.50.40:FF:000006">
    <property type="entry name" value="Peptidyl-prolyl cis-trans isomerase"/>
    <property type="match status" value="1"/>
</dbReference>
<dbReference type="Gene3D" id="3.10.50.40">
    <property type="match status" value="1"/>
</dbReference>
<dbReference type="Gene3D" id="2.60.120.340">
    <property type="entry name" value="Nucleoplasmin core domain"/>
    <property type="match status" value="1"/>
</dbReference>
<dbReference type="InterPro" id="IPR041232">
    <property type="entry name" value="NPL"/>
</dbReference>
<dbReference type="InterPro" id="IPR046357">
    <property type="entry name" value="PPIase_dom_sf"/>
</dbReference>
<dbReference type="InterPro" id="IPR001179">
    <property type="entry name" value="PPIase_FKBP_dom"/>
</dbReference>
<dbReference type="InterPro" id="IPR023566">
    <property type="entry name" value="PPIase_Fpr3/Fpr4-like"/>
</dbReference>
<dbReference type="PANTHER" id="PTHR43811:SF19">
    <property type="entry name" value="39 KDA FK506-BINDING NUCLEAR PROTEIN"/>
    <property type="match status" value="1"/>
</dbReference>
<dbReference type="PANTHER" id="PTHR43811">
    <property type="entry name" value="FKBP-TYPE PEPTIDYL-PROLYL CIS-TRANS ISOMERASE FKPA"/>
    <property type="match status" value="1"/>
</dbReference>
<dbReference type="Pfam" id="PF00254">
    <property type="entry name" value="FKBP_C"/>
    <property type="match status" value="1"/>
</dbReference>
<dbReference type="Pfam" id="PF17800">
    <property type="entry name" value="NPL"/>
    <property type="match status" value="1"/>
</dbReference>
<dbReference type="PIRSF" id="PIRSF001473">
    <property type="entry name" value="FK506-bp_FPR3"/>
    <property type="match status" value="1"/>
</dbReference>
<dbReference type="SUPFAM" id="SSF54534">
    <property type="entry name" value="FKBP-like"/>
    <property type="match status" value="1"/>
</dbReference>
<dbReference type="PROSITE" id="PS50059">
    <property type="entry name" value="FKBP_PPIASE"/>
    <property type="match status" value="1"/>
</dbReference>
<comment type="function">
    <text evidence="2">PPIase that acts as a histone chaperone. Histone proline isomerase that increases the rate of cis-trans isomerization at prolines on the histone H3 N-terminal tail. Proline isomerization influences H3 methylation thereby regulating gene expression.</text>
</comment>
<comment type="catalytic activity">
    <reaction evidence="2">
        <text>[protein]-peptidylproline (omega=180) = [protein]-peptidylproline (omega=0)</text>
        <dbReference type="Rhea" id="RHEA:16237"/>
        <dbReference type="Rhea" id="RHEA-COMP:10747"/>
        <dbReference type="Rhea" id="RHEA-COMP:10748"/>
        <dbReference type="ChEBI" id="CHEBI:83833"/>
        <dbReference type="ChEBI" id="CHEBI:83834"/>
        <dbReference type="EC" id="5.2.1.8"/>
    </reaction>
</comment>
<comment type="activity regulation">
    <text evidence="1">Inhibited by both FK506 and rapamycin.</text>
</comment>
<comment type="subunit">
    <text evidence="2">Binds to histones H3 and H4.</text>
</comment>
<comment type="subcellular location">
    <subcellularLocation>
        <location evidence="2">Nucleus</location>
    </subcellularLocation>
</comment>
<comment type="similarity">
    <text evidence="5">Belongs to the FKBP-type PPIase family. FKBP3/4 subfamily.</text>
</comment>
<comment type="sequence caution" evidence="5">
    <conflict type="erroneous gene model prediction">
        <sequence resource="EMBL-CDS" id="EAL88709"/>
    </conflict>
</comment>
<name>FKBP4_ASPFU</name>
<organism>
    <name type="scientific">Aspergillus fumigatus (strain ATCC MYA-4609 / CBS 101355 / FGSC A1100 / Af293)</name>
    <name type="common">Neosartorya fumigata</name>
    <dbReference type="NCBI Taxonomy" id="330879"/>
    <lineage>
        <taxon>Eukaryota</taxon>
        <taxon>Fungi</taxon>
        <taxon>Dikarya</taxon>
        <taxon>Ascomycota</taxon>
        <taxon>Pezizomycotina</taxon>
        <taxon>Eurotiomycetes</taxon>
        <taxon>Eurotiomycetidae</taxon>
        <taxon>Eurotiales</taxon>
        <taxon>Aspergillaceae</taxon>
        <taxon>Aspergillus</taxon>
        <taxon>Aspergillus subgen. Fumigati</taxon>
    </lineage>
</organism>
<reference key="1">
    <citation type="journal article" date="2005" name="Nature">
        <title>Genomic sequence of the pathogenic and allergenic filamentous fungus Aspergillus fumigatus.</title>
        <authorList>
            <person name="Nierman W.C."/>
            <person name="Pain A."/>
            <person name="Anderson M.J."/>
            <person name="Wortman J.R."/>
            <person name="Kim H.S."/>
            <person name="Arroyo J."/>
            <person name="Berriman M."/>
            <person name="Abe K."/>
            <person name="Archer D.B."/>
            <person name="Bermejo C."/>
            <person name="Bennett J.W."/>
            <person name="Bowyer P."/>
            <person name="Chen D."/>
            <person name="Collins M."/>
            <person name="Coulsen R."/>
            <person name="Davies R."/>
            <person name="Dyer P.S."/>
            <person name="Farman M.L."/>
            <person name="Fedorova N."/>
            <person name="Fedorova N.D."/>
            <person name="Feldblyum T.V."/>
            <person name="Fischer R."/>
            <person name="Fosker N."/>
            <person name="Fraser A."/>
            <person name="Garcia J.L."/>
            <person name="Garcia M.J."/>
            <person name="Goble A."/>
            <person name="Goldman G.H."/>
            <person name="Gomi K."/>
            <person name="Griffith-Jones S."/>
            <person name="Gwilliam R."/>
            <person name="Haas B.J."/>
            <person name="Haas H."/>
            <person name="Harris D.E."/>
            <person name="Horiuchi H."/>
            <person name="Huang J."/>
            <person name="Humphray S."/>
            <person name="Jimenez J."/>
            <person name="Keller N."/>
            <person name="Khouri H."/>
            <person name="Kitamoto K."/>
            <person name="Kobayashi T."/>
            <person name="Konzack S."/>
            <person name="Kulkarni R."/>
            <person name="Kumagai T."/>
            <person name="Lafton A."/>
            <person name="Latge J.-P."/>
            <person name="Li W."/>
            <person name="Lord A."/>
            <person name="Lu C."/>
            <person name="Majoros W.H."/>
            <person name="May G.S."/>
            <person name="Miller B.L."/>
            <person name="Mohamoud Y."/>
            <person name="Molina M."/>
            <person name="Monod M."/>
            <person name="Mouyna I."/>
            <person name="Mulligan S."/>
            <person name="Murphy L.D."/>
            <person name="O'Neil S."/>
            <person name="Paulsen I."/>
            <person name="Penalva M.A."/>
            <person name="Pertea M."/>
            <person name="Price C."/>
            <person name="Pritchard B.L."/>
            <person name="Quail M.A."/>
            <person name="Rabbinowitsch E."/>
            <person name="Rawlins N."/>
            <person name="Rajandream M.A."/>
            <person name="Reichard U."/>
            <person name="Renauld H."/>
            <person name="Robson G.D."/>
            <person name="Rodriguez de Cordoba S."/>
            <person name="Rodriguez-Pena J.M."/>
            <person name="Ronning C.M."/>
            <person name="Rutter S."/>
            <person name="Salzberg S.L."/>
            <person name="Sanchez M."/>
            <person name="Sanchez-Ferrero J.C."/>
            <person name="Saunders D."/>
            <person name="Seeger K."/>
            <person name="Squares R."/>
            <person name="Squares S."/>
            <person name="Takeuchi M."/>
            <person name="Tekaia F."/>
            <person name="Turner G."/>
            <person name="Vazquez de Aldana C.R."/>
            <person name="Weidman J."/>
            <person name="White O."/>
            <person name="Woodward J.R."/>
            <person name="Yu J.-H."/>
            <person name="Fraser C.M."/>
            <person name="Galagan J.E."/>
            <person name="Asai K."/>
            <person name="Machida M."/>
            <person name="Hall N."/>
            <person name="Barrell B.G."/>
            <person name="Denning D.W."/>
        </authorList>
    </citation>
    <scope>NUCLEOTIDE SEQUENCE [LARGE SCALE GENOMIC DNA]</scope>
    <source>
        <strain>ATCC MYA-4609 / CBS 101355 / FGSC A1100 / Af293</strain>
    </source>
</reference>
<reference key="2">
    <citation type="submission" date="2006-02" db="UniProtKB">
        <authorList>
            <person name="Pemberton T.J."/>
        </authorList>
    </citation>
    <scope>REVISION OF GENE MODEL</scope>
</reference>
<feature type="chain" id="PRO_0000233074" description="FK506-binding protein 4">
    <location>
        <begin position="1"/>
        <end position="489"/>
    </location>
</feature>
<feature type="domain" description="PPIase FKBP-type" evidence="3">
    <location>
        <begin position="406"/>
        <end position="489"/>
    </location>
</feature>
<feature type="region of interest" description="Disordered" evidence="4">
    <location>
        <begin position="40"/>
        <end position="157"/>
    </location>
</feature>
<feature type="region of interest" description="Disordered" evidence="4">
    <location>
        <begin position="199"/>
        <end position="378"/>
    </location>
</feature>
<feature type="compositionally biased region" description="Acidic residues" evidence="4">
    <location>
        <begin position="66"/>
        <end position="88"/>
    </location>
</feature>
<feature type="compositionally biased region" description="Basic and acidic residues" evidence="4">
    <location>
        <begin position="93"/>
        <end position="109"/>
    </location>
</feature>
<feature type="compositionally biased region" description="Acidic residues" evidence="4">
    <location>
        <begin position="110"/>
        <end position="125"/>
    </location>
</feature>
<feature type="compositionally biased region" description="Acidic residues" evidence="4">
    <location>
        <begin position="143"/>
        <end position="157"/>
    </location>
</feature>
<feature type="compositionally biased region" description="Acidic residues" evidence="4">
    <location>
        <begin position="208"/>
        <end position="250"/>
    </location>
</feature>
<feature type="compositionally biased region" description="Basic and acidic residues" evidence="4">
    <location>
        <begin position="267"/>
        <end position="282"/>
    </location>
</feature>
<feature type="compositionally biased region" description="Basic and acidic residues" evidence="4">
    <location>
        <begin position="292"/>
        <end position="303"/>
    </location>
</feature>
<feature type="compositionally biased region" description="Basic and acidic residues" evidence="4">
    <location>
        <begin position="328"/>
        <end position="353"/>
    </location>
</feature>
<feature type="compositionally biased region" description="Polar residues" evidence="4">
    <location>
        <begin position="362"/>
        <end position="378"/>
    </location>
</feature>
<proteinExistence type="inferred from homology"/>
<gene>
    <name type="primary">fpr4</name>
    <name type="ORF">AFUA_6G08580</name>
</gene>
<accession>Q4WMV5</accession>